<name>G6PI_ARALP</name>
<reference key="1">
    <citation type="journal article" date="2000" name="Genetics">
        <title>DNA polymorphism at the cytosolic phosphoglucose isomerase (PgiC) locus of the wild plant Arabidopsis thaliana.</title>
        <authorList>
            <person name="Kawabe A."/>
            <person name="Yamane K."/>
            <person name="Miyashita N.T."/>
        </authorList>
    </citation>
    <scope>NUCLEOTIDE SEQUENCE [GENOMIC DNA]</scope>
    <source>
        <strain>cv. Strosanden 1</strain>
    </source>
</reference>
<dbReference type="EC" id="5.3.1.9"/>
<dbReference type="EMBL" id="AB044969">
    <property type="protein sequence ID" value="BAB17656.1"/>
    <property type="molecule type" value="Genomic_DNA"/>
</dbReference>
<dbReference type="SMR" id="Q9FXM4"/>
<dbReference type="UniPathway" id="UPA00109">
    <property type="reaction ID" value="UER00181"/>
</dbReference>
<dbReference type="GO" id="GO:0005829">
    <property type="term" value="C:cytosol"/>
    <property type="evidence" value="ECO:0007669"/>
    <property type="project" value="TreeGrafter"/>
</dbReference>
<dbReference type="GO" id="GO:0097367">
    <property type="term" value="F:carbohydrate derivative binding"/>
    <property type="evidence" value="ECO:0007669"/>
    <property type="project" value="InterPro"/>
</dbReference>
<dbReference type="GO" id="GO:0004347">
    <property type="term" value="F:glucose-6-phosphate isomerase activity"/>
    <property type="evidence" value="ECO:0007669"/>
    <property type="project" value="UniProtKB-EC"/>
</dbReference>
<dbReference type="GO" id="GO:0048029">
    <property type="term" value="F:monosaccharide binding"/>
    <property type="evidence" value="ECO:0007669"/>
    <property type="project" value="TreeGrafter"/>
</dbReference>
<dbReference type="GO" id="GO:0006094">
    <property type="term" value="P:gluconeogenesis"/>
    <property type="evidence" value="ECO:0007669"/>
    <property type="project" value="UniProtKB-KW"/>
</dbReference>
<dbReference type="GO" id="GO:0051156">
    <property type="term" value="P:glucose 6-phosphate metabolic process"/>
    <property type="evidence" value="ECO:0007669"/>
    <property type="project" value="TreeGrafter"/>
</dbReference>
<dbReference type="GO" id="GO:0006096">
    <property type="term" value="P:glycolytic process"/>
    <property type="evidence" value="ECO:0007669"/>
    <property type="project" value="UniProtKB-UniPathway"/>
</dbReference>
<dbReference type="CDD" id="cd05015">
    <property type="entry name" value="SIS_PGI_1"/>
    <property type="match status" value="1"/>
</dbReference>
<dbReference type="CDD" id="cd05016">
    <property type="entry name" value="SIS_PGI_2"/>
    <property type="match status" value="1"/>
</dbReference>
<dbReference type="FunFam" id="1.10.1390.10:FF:000002">
    <property type="entry name" value="Glucose-6-phosphate isomerase"/>
    <property type="match status" value="1"/>
</dbReference>
<dbReference type="FunFam" id="3.40.50.10490:FF:000018">
    <property type="entry name" value="Glucose-6-phosphate isomerase"/>
    <property type="match status" value="1"/>
</dbReference>
<dbReference type="FunFam" id="3.40.50.10490:FF:000031">
    <property type="entry name" value="Glucose-6-phosphate isomerase"/>
    <property type="match status" value="1"/>
</dbReference>
<dbReference type="FunFam" id="3.40.50.10490:FF:000048">
    <property type="entry name" value="Glucose-6-phosphate isomerase"/>
    <property type="match status" value="1"/>
</dbReference>
<dbReference type="Gene3D" id="1.10.1390.10">
    <property type="match status" value="1"/>
</dbReference>
<dbReference type="Gene3D" id="3.40.50.10490">
    <property type="entry name" value="Glucose-6-phosphate isomerase like protein, domain 1"/>
    <property type="match status" value="2"/>
</dbReference>
<dbReference type="HAMAP" id="MF_00473">
    <property type="entry name" value="G6P_isomerase"/>
    <property type="match status" value="1"/>
</dbReference>
<dbReference type="InterPro" id="IPR001672">
    <property type="entry name" value="G6P_Isomerase"/>
</dbReference>
<dbReference type="InterPro" id="IPR023096">
    <property type="entry name" value="G6P_Isomerase_C"/>
</dbReference>
<dbReference type="InterPro" id="IPR018189">
    <property type="entry name" value="Phosphoglucose_isomerase_CS"/>
</dbReference>
<dbReference type="InterPro" id="IPR046348">
    <property type="entry name" value="SIS_dom_sf"/>
</dbReference>
<dbReference type="InterPro" id="IPR035476">
    <property type="entry name" value="SIS_PGI_1"/>
</dbReference>
<dbReference type="InterPro" id="IPR035482">
    <property type="entry name" value="SIS_PGI_2"/>
</dbReference>
<dbReference type="NCBIfam" id="NF001211">
    <property type="entry name" value="PRK00179.1"/>
    <property type="match status" value="1"/>
</dbReference>
<dbReference type="PANTHER" id="PTHR11469">
    <property type="entry name" value="GLUCOSE-6-PHOSPHATE ISOMERASE"/>
    <property type="match status" value="1"/>
</dbReference>
<dbReference type="PANTHER" id="PTHR11469:SF1">
    <property type="entry name" value="GLUCOSE-6-PHOSPHATE ISOMERASE"/>
    <property type="match status" value="1"/>
</dbReference>
<dbReference type="Pfam" id="PF00342">
    <property type="entry name" value="PGI"/>
    <property type="match status" value="1"/>
</dbReference>
<dbReference type="PRINTS" id="PR00662">
    <property type="entry name" value="G6PISOMERASE"/>
</dbReference>
<dbReference type="SUPFAM" id="SSF53697">
    <property type="entry name" value="SIS domain"/>
    <property type="match status" value="1"/>
</dbReference>
<dbReference type="PROSITE" id="PS00765">
    <property type="entry name" value="P_GLUCOSE_ISOMERASE_1"/>
    <property type="match status" value="1"/>
</dbReference>
<dbReference type="PROSITE" id="PS00174">
    <property type="entry name" value="P_GLUCOSE_ISOMERASE_2"/>
    <property type="match status" value="1"/>
</dbReference>
<dbReference type="PROSITE" id="PS51463">
    <property type="entry name" value="P_GLUCOSE_ISOMERASE_3"/>
    <property type="match status" value="1"/>
</dbReference>
<proteinExistence type="inferred from homology"/>
<keyword id="KW-0007">Acetylation</keyword>
<keyword id="KW-0963">Cytoplasm</keyword>
<keyword id="KW-0312">Gluconeogenesis</keyword>
<keyword id="KW-0324">Glycolysis</keyword>
<keyword id="KW-0413">Isomerase</keyword>
<sequence length="560" mass="61748">MASSTALISDTEAWKDLKGHVEDIKKTHLRDLMTDANRCQSMMMEFDGLLLDYSRQRAPVETMDKLLNLAKAAQLTEKISRMFNGEHINSTENRSVLHVALRAPKDAVIKADGKNVVQEVWNVLDKIKEFSEKIRSGSWVGATGKPLKDVIAIGIGGSFLGPLFVHTALQTDPEALESAKGRQLRFLANIDPVDVARNIIGLNPETTLVVVVSKTFTTAETMLNARTLREWITAALGASAVAKHMVAVSTNLALVEKFGIDPNNAFAFWDWVGGRYSVCSAVGVLPLSLQYGFSVVEKFLKGASSIDQHFQSTPFEKNIPVLLGLLSVWNVSFLGYPARAILPYSQALEKFAPHIQQVSMESNGKGVSIDGLPLPFETGEIDFGEPGTNGQHSFYQLIHQGRVIPCDFIGIVKSQQPVYLKGEVVSNHDELMSNFFAQPDALAYGKTPEQLQKENVSENLIPHKTFSGNRPSLSLLLPELTAYNVGQLLAIYEHRVAVQGFVWGINSFDQWGVELGKVLATQVRKQLHSSRTQGTALEGFNYSTTTLLKRYLETSSEPQM</sequence>
<organism>
    <name type="scientific">Arabidopsis lyrata subsp. petraea</name>
    <name type="common">Northern rock-cress</name>
    <name type="synonym">Cardaminopsis petraea</name>
    <dbReference type="NCBI Taxonomy" id="59691"/>
    <lineage>
        <taxon>Eukaryota</taxon>
        <taxon>Viridiplantae</taxon>
        <taxon>Streptophyta</taxon>
        <taxon>Embryophyta</taxon>
        <taxon>Tracheophyta</taxon>
        <taxon>Spermatophyta</taxon>
        <taxon>Magnoliopsida</taxon>
        <taxon>eudicotyledons</taxon>
        <taxon>Gunneridae</taxon>
        <taxon>Pentapetalae</taxon>
        <taxon>rosids</taxon>
        <taxon>malvids</taxon>
        <taxon>Brassicales</taxon>
        <taxon>Brassicaceae</taxon>
        <taxon>Camelineae</taxon>
        <taxon>Arabidopsis</taxon>
    </lineage>
</organism>
<comment type="catalytic activity">
    <reaction>
        <text>alpha-D-glucose 6-phosphate = beta-D-fructose 6-phosphate</text>
        <dbReference type="Rhea" id="RHEA:11816"/>
        <dbReference type="ChEBI" id="CHEBI:57634"/>
        <dbReference type="ChEBI" id="CHEBI:58225"/>
        <dbReference type="EC" id="5.3.1.9"/>
    </reaction>
</comment>
<comment type="pathway">
    <text>Carbohydrate degradation; glycolysis; D-glyceraldehyde 3-phosphate and glycerone phosphate from D-glucose: step 2/4.</text>
</comment>
<comment type="subunit">
    <text evidence="1">Homodimer.</text>
</comment>
<comment type="subcellular location">
    <subcellularLocation>
        <location>Cytoplasm</location>
    </subcellularLocation>
</comment>
<comment type="similarity">
    <text evidence="3">Belongs to the GPI family.</text>
</comment>
<accession>Q9FXM4</accession>
<feature type="initiator methionine" description="Removed" evidence="2">
    <location>
        <position position="1"/>
    </location>
</feature>
<feature type="chain" id="PRO_0000180551" description="Glucose-6-phosphate isomerase, cytosolic">
    <location>
        <begin position="2"/>
        <end position="560"/>
    </location>
</feature>
<feature type="active site" description="Proton donor" evidence="1">
    <location>
        <position position="361"/>
    </location>
</feature>
<feature type="active site" evidence="1">
    <location>
        <position position="392"/>
    </location>
</feature>
<feature type="active site" evidence="1">
    <location>
        <position position="517"/>
    </location>
</feature>
<feature type="modified residue" description="N-acetylalanine" evidence="2">
    <location>
        <position position="2"/>
    </location>
</feature>
<evidence type="ECO:0000250" key="1"/>
<evidence type="ECO:0000250" key="2">
    <source>
        <dbReference type="UniProtKB" id="P34795"/>
    </source>
</evidence>
<evidence type="ECO:0000305" key="3"/>
<gene>
    <name type="primary">PGIC</name>
</gene>
<protein>
    <recommendedName>
        <fullName>Glucose-6-phosphate isomerase, cytosolic</fullName>
        <shortName>GPI</shortName>
        <ecNumber>5.3.1.9</ecNumber>
    </recommendedName>
    <alternativeName>
        <fullName>Phosphoglucose isomerase</fullName>
        <shortName>PGI</shortName>
    </alternativeName>
    <alternativeName>
        <fullName>Phosphohexose isomerase</fullName>
        <shortName>PHI</shortName>
    </alternativeName>
</protein>